<gene>
    <name type="primary">MLLT6</name>
    <name type="synonym">AF17</name>
</gene>
<feature type="chain" id="PRO_0000215937" description="Protein AF-17">
    <location>
        <begin position="1"/>
        <end position="1093"/>
    </location>
</feature>
<feature type="zinc finger region" description="PHD-type 1" evidence="1">
    <location>
        <begin position="5"/>
        <end position="57"/>
    </location>
</feature>
<feature type="zinc finger region" description="C2HC pre-PHD-type" evidence="2">
    <location>
        <begin position="62"/>
        <end position="95"/>
    </location>
</feature>
<feature type="zinc finger region" description="PHD-type 2" evidence="2">
    <location>
        <begin position="118"/>
        <end position="181"/>
    </location>
</feature>
<feature type="region of interest" description="Disordered" evidence="3">
    <location>
        <begin position="185"/>
        <end position="500"/>
    </location>
</feature>
<feature type="region of interest" description="Leucine-zipper">
    <location>
        <begin position="729"/>
        <end position="764"/>
    </location>
</feature>
<feature type="region of interest" description="Disordered" evidence="3">
    <location>
        <begin position="775"/>
        <end position="871"/>
    </location>
</feature>
<feature type="region of interest" description="Disordered" evidence="3">
    <location>
        <begin position="1060"/>
        <end position="1093"/>
    </location>
</feature>
<feature type="compositionally biased region" description="Gly residues" evidence="3">
    <location>
        <begin position="191"/>
        <end position="212"/>
    </location>
</feature>
<feature type="compositionally biased region" description="Basic residues" evidence="3">
    <location>
        <begin position="231"/>
        <end position="255"/>
    </location>
</feature>
<feature type="compositionally biased region" description="Pro residues" evidence="3">
    <location>
        <begin position="258"/>
        <end position="268"/>
    </location>
</feature>
<feature type="compositionally biased region" description="Basic and acidic residues" evidence="3">
    <location>
        <begin position="282"/>
        <end position="300"/>
    </location>
</feature>
<feature type="compositionally biased region" description="Basic residues" evidence="3">
    <location>
        <begin position="301"/>
        <end position="316"/>
    </location>
</feature>
<feature type="compositionally biased region" description="Low complexity" evidence="3">
    <location>
        <begin position="317"/>
        <end position="340"/>
    </location>
</feature>
<feature type="compositionally biased region" description="Polar residues" evidence="3">
    <location>
        <begin position="345"/>
        <end position="354"/>
    </location>
</feature>
<feature type="compositionally biased region" description="Pro residues" evidence="3">
    <location>
        <begin position="374"/>
        <end position="388"/>
    </location>
</feature>
<feature type="compositionally biased region" description="Low complexity" evidence="3">
    <location>
        <begin position="410"/>
        <end position="425"/>
    </location>
</feature>
<feature type="compositionally biased region" description="Basic residues" evidence="3">
    <location>
        <begin position="465"/>
        <end position="484"/>
    </location>
</feature>
<feature type="compositionally biased region" description="Low complexity" evidence="3">
    <location>
        <begin position="787"/>
        <end position="796"/>
    </location>
</feature>
<feature type="compositionally biased region" description="Polar residues" evidence="3">
    <location>
        <begin position="804"/>
        <end position="813"/>
    </location>
</feature>
<feature type="compositionally biased region" description="Low complexity" evidence="3">
    <location>
        <begin position="818"/>
        <end position="832"/>
    </location>
</feature>
<feature type="compositionally biased region" description="Low complexity" evidence="3">
    <location>
        <begin position="839"/>
        <end position="853"/>
    </location>
</feature>
<feature type="site" description="KMT2A/MLL1 fusion point (in acute myeloid leukemia patient)">
    <location>
        <position position="551"/>
    </location>
</feature>
<feature type="modified residue" description="Phosphoserine" evidence="7">
    <location>
        <position position="258"/>
    </location>
</feature>
<feature type="modified residue" description="Phosphoserine" evidence="7">
    <location>
        <position position="378"/>
    </location>
</feature>
<feature type="modified residue" description="Phosphoserine" evidence="7">
    <location>
        <position position="423"/>
    </location>
</feature>
<feature type="modified residue" description="Phosphothreonine" evidence="6">
    <location>
        <position position="451"/>
    </location>
</feature>
<feature type="sequence variant" id="VAR_080170" description="In dbSNP:rs17855918.">
    <original>A</original>
    <variation>V</variation>
    <location>
        <position position="33"/>
    </location>
</feature>
<feature type="sequence variant" id="VAR_022076" description="In dbSNP:rs2241012.">
    <original>A</original>
    <variation>T</variation>
    <location>
        <position position="198"/>
    </location>
</feature>
<feature type="sequence conflict" description="In Ref. 1; AAA21145." evidence="5" ref="1">
    <original>Q</original>
    <variation>T</variation>
    <location>
        <position position="126"/>
    </location>
</feature>
<feature type="sequence conflict" description="In Ref. 3; BAD92870." evidence="5" ref="3">
    <original>R</original>
    <variation>W</variation>
    <location>
        <position position="735"/>
    </location>
</feature>
<feature type="sequence conflict" description="In Ref. 4; BAB15670." evidence="5" ref="4">
    <original>L</original>
    <variation>P</variation>
    <location>
        <position position="1065"/>
    </location>
</feature>
<dbReference type="EMBL" id="U07932">
    <property type="protein sequence ID" value="AAA21145.1"/>
    <property type="molecule type" value="mRNA"/>
</dbReference>
<dbReference type="EMBL" id="AC006449">
    <property type="status" value="NOT_ANNOTATED_CDS"/>
    <property type="molecule type" value="Genomic_DNA"/>
</dbReference>
<dbReference type="EMBL" id="AB209633">
    <property type="protein sequence ID" value="BAD92870.1"/>
    <property type="molecule type" value="mRNA"/>
</dbReference>
<dbReference type="EMBL" id="AK027133">
    <property type="protein sequence ID" value="BAB15670.1"/>
    <property type="status" value="ALT_INIT"/>
    <property type="molecule type" value="mRNA"/>
</dbReference>
<dbReference type="EMBL" id="BC007237">
    <property type="protein sequence ID" value="AAH07237.1"/>
    <property type="status" value="ALT_INIT"/>
    <property type="molecule type" value="mRNA"/>
</dbReference>
<dbReference type="EMBL" id="AL133659">
    <property type="protein sequence ID" value="CAB63772.2"/>
    <property type="molecule type" value="mRNA"/>
</dbReference>
<dbReference type="CCDS" id="CCDS11327.1"/>
<dbReference type="PIR" id="I38533">
    <property type="entry name" value="I38533"/>
</dbReference>
<dbReference type="RefSeq" id="NP_005928.2">
    <property type="nucleotide sequence ID" value="NM_005937.4"/>
</dbReference>
<dbReference type="SMR" id="P55198"/>
<dbReference type="BioGRID" id="110448">
    <property type="interactions" value="103"/>
</dbReference>
<dbReference type="FunCoup" id="P55198">
    <property type="interactions" value="1691"/>
</dbReference>
<dbReference type="IntAct" id="P55198">
    <property type="interactions" value="60"/>
</dbReference>
<dbReference type="STRING" id="9606.ENSP00000479910"/>
<dbReference type="GlyCosmos" id="P55198">
    <property type="glycosylation" value="18 sites, 2 glycans"/>
</dbReference>
<dbReference type="GlyGen" id="P55198">
    <property type="glycosylation" value="31 sites, 2 O-linked glycans (31 sites)"/>
</dbReference>
<dbReference type="iPTMnet" id="P55198"/>
<dbReference type="PhosphoSitePlus" id="P55198"/>
<dbReference type="BioMuta" id="MLLT6"/>
<dbReference type="DMDM" id="215273929"/>
<dbReference type="jPOST" id="P55198"/>
<dbReference type="MassIVE" id="P55198"/>
<dbReference type="PaxDb" id="9606-ENSP00000479910"/>
<dbReference type="PeptideAtlas" id="P55198"/>
<dbReference type="ProteomicsDB" id="56804"/>
<dbReference type="Pumba" id="P55198"/>
<dbReference type="Antibodypedia" id="73458">
    <property type="antibodies" value="120 antibodies from 19 providers"/>
</dbReference>
<dbReference type="DNASU" id="4302"/>
<dbReference type="Ensembl" id="ENST00000618876.2">
    <property type="protein sequence ID" value="ENSP00000477969.1"/>
    <property type="gene ID" value="ENSG00000275851.4"/>
</dbReference>
<dbReference type="Ensembl" id="ENST00000621332.5">
    <property type="protein sequence ID" value="ENSP00000479910.1"/>
    <property type="gene ID" value="ENSG00000275023.5"/>
</dbReference>
<dbReference type="GeneID" id="4302"/>
<dbReference type="KEGG" id="hsa:4302"/>
<dbReference type="MANE-Select" id="ENST00000621332.5">
    <property type="protein sequence ID" value="ENSP00000479910.1"/>
    <property type="RefSeq nucleotide sequence ID" value="NM_005937.4"/>
    <property type="RefSeq protein sequence ID" value="NP_005928.2"/>
</dbReference>
<dbReference type="AGR" id="HGNC:7138"/>
<dbReference type="CTD" id="4302"/>
<dbReference type="DisGeNET" id="4302"/>
<dbReference type="GeneCards" id="MLLT6"/>
<dbReference type="HGNC" id="HGNC:7138">
    <property type="gene designation" value="MLLT6"/>
</dbReference>
<dbReference type="HPA" id="ENSG00000275023">
    <property type="expression patterns" value="Low tissue specificity"/>
</dbReference>
<dbReference type="MIM" id="600328">
    <property type="type" value="gene"/>
</dbReference>
<dbReference type="neXtProt" id="NX_P55198"/>
<dbReference type="OpenTargets" id="ENSG00000275023"/>
<dbReference type="PharmGKB" id="PA30854"/>
<dbReference type="VEuPathDB" id="HostDB:ENSG00000275023"/>
<dbReference type="eggNOG" id="KOG0956">
    <property type="taxonomic scope" value="Eukaryota"/>
</dbReference>
<dbReference type="GeneTree" id="ENSGT00940000158572"/>
<dbReference type="InParanoid" id="P55198"/>
<dbReference type="OMA" id="EKHPAHH"/>
<dbReference type="OrthoDB" id="20839at2759"/>
<dbReference type="PAN-GO" id="P55198">
    <property type="GO annotations" value="4 GO annotations based on evolutionary models"/>
</dbReference>
<dbReference type="PhylomeDB" id="P55198"/>
<dbReference type="TreeFam" id="TF316118"/>
<dbReference type="PathwayCommons" id="P55198"/>
<dbReference type="SignaLink" id="P55198"/>
<dbReference type="BioGRID-ORCS" id="4302">
    <property type="hits" value="31 hits in 1160 CRISPR screens"/>
</dbReference>
<dbReference type="ChiTaRS" id="MLLT6">
    <property type="organism name" value="human"/>
</dbReference>
<dbReference type="GenomeRNAi" id="4302"/>
<dbReference type="Pharos" id="P55198">
    <property type="development level" value="Tdark"/>
</dbReference>
<dbReference type="PRO" id="PR:P55198"/>
<dbReference type="Proteomes" id="UP000005640">
    <property type="component" value="Chromosome 17"/>
</dbReference>
<dbReference type="RNAct" id="P55198">
    <property type="molecule type" value="protein"/>
</dbReference>
<dbReference type="Bgee" id="ENSG00000275023">
    <property type="expression patterns" value="Expressed in right uterine tube and 101 other cell types or tissues"/>
</dbReference>
<dbReference type="ExpressionAtlas" id="P55198">
    <property type="expression patterns" value="baseline and differential"/>
</dbReference>
<dbReference type="GO" id="GO:0005634">
    <property type="term" value="C:nucleus"/>
    <property type="evidence" value="ECO:0000318"/>
    <property type="project" value="GO_Central"/>
</dbReference>
<dbReference type="GO" id="GO:0042393">
    <property type="term" value="F:histone binding"/>
    <property type="evidence" value="ECO:0000353"/>
    <property type="project" value="UniProtKB"/>
</dbReference>
<dbReference type="GO" id="GO:0031491">
    <property type="term" value="F:nucleosome binding"/>
    <property type="evidence" value="ECO:0000314"/>
    <property type="project" value="UniProtKB"/>
</dbReference>
<dbReference type="GO" id="GO:0008270">
    <property type="term" value="F:zinc ion binding"/>
    <property type="evidence" value="ECO:0007669"/>
    <property type="project" value="UniProtKB-KW"/>
</dbReference>
<dbReference type="GO" id="GO:0006325">
    <property type="term" value="P:chromatin organization"/>
    <property type="evidence" value="ECO:0007669"/>
    <property type="project" value="Ensembl"/>
</dbReference>
<dbReference type="GO" id="GO:0035811">
    <property type="term" value="P:negative regulation of urine volume"/>
    <property type="evidence" value="ECO:0007669"/>
    <property type="project" value="Ensembl"/>
</dbReference>
<dbReference type="GO" id="GO:0010765">
    <property type="term" value="P:positive regulation of sodium ion transport"/>
    <property type="evidence" value="ECO:0007669"/>
    <property type="project" value="Ensembl"/>
</dbReference>
<dbReference type="GO" id="GO:0045944">
    <property type="term" value="P:positive regulation of transcription by RNA polymerase II"/>
    <property type="evidence" value="ECO:0007669"/>
    <property type="project" value="Ensembl"/>
</dbReference>
<dbReference type="GO" id="GO:0006355">
    <property type="term" value="P:regulation of DNA-templated transcription"/>
    <property type="evidence" value="ECO:0000304"/>
    <property type="project" value="ProtInc"/>
</dbReference>
<dbReference type="GO" id="GO:0006357">
    <property type="term" value="P:regulation of transcription by RNA polymerase II"/>
    <property type="evidence" value="ECO:0000318"/>
    <property type="project" value="GO_Central"/>
</dbReference>
<dbReference type="GO" id="GO:0036359">
    <property type="term" value="P:renal potassium excretion"/>
    <property type="evidence" value="ECO:0007669"/>
    <property type="project" value="Ensembl"/>
</dbReference>
<dbReference type="GO" id="GO:0035812">
    <property type="term" value="P:renal sodium excretion"/>
    <property type="evidence" value="ECO:0007669"/>
    <property type="project" value="Ensembl"/>
</dbReference>
<dbReference type="GO" id="GO:0070295">
    <property type="term" value="P:renal water absorption"/>
    <property type="evidence" value="ECO:0007669"/>
    <property type="project" value="Ensembl"/>
</dbReference>
<dbReference type="CDD" id="cd15709">
    <property type="entry name" value="ePHD_AF17"/>
    <property type="match status" value="1"/>
</dbReference>
<dbReference type="CDD" id="cd15574">
    <property type="entry name" value="PHD_AF10_AF17"/>
    <property type="match status" value="1"/>
</dbReference>
<dbReference type="FunFam" id="3.30.40.10:FF:000042">
    <property type="entry name" value="protein AF-10 isoform X1"/>
    <property type="match status" value="1"/>
</dbReference>
<dbReference type="FunFam" id="3.30.40.10:FF:000053">
    <property type="entry name" value="protein AF-10 isoform X2"/>
    <property type="match status" value="1"/>
</dbReference>
<dbReference type="Gene3D" id="3.30.40.10">
    <property type="entry name" value="Zinc/RING finger domain, C3HC4 (zinc finger)"/>
    <property type="match status" value="2"/>
</dbReference>
<dbReference type="InterPro" id="IPR049781">
    <property type="entry name" value="AF10/AF17_PHD"/>
</dbReference>
<dbReference type="InterPro" id="IPR034732">
    <property type="entry name" value="EPHD"/>
</dbReference>
<dbReference type="InterPro" id="IPR050701">
    <property type="entry name" value="Histone_Mod_Regulator"/>
</dbReference>
<dbReference type="InterPro" id="IPR019786">
    <property type="entry name" value="Zinc_finger_PHD-type_CS"/>
</dbReference>
<dbReference type="InterPro" id="IPR011011">
    <property type="entry name" value="Znf_FYVE_PHD"/>
</dbReference>
<dbReference type="InterPro" id="IPR001965">
    <property type="entry name" value="Znf_PHD"/>
</dbReference>
<dbReference type="InterPro" id="IPR019787">
    <property type="entry name" value="Znf_PHD-finger"/>
</dbReference>
<dbReference type="InterPro" id="IPR013083">
    <property type="entry name" value="Znf_RING/FYVE/PHD"/>
</dbReference>
<dbReference type="PANTHER" id="PTHR13793">
    <property type="entry name" value="PHD FINGER PROTEINS"/>
    <property type="match status" value="1"/>
</dbReference>
<dbReference type="PANTHER" id="PTHR13793:SF90">
    <property type="entry name" value="PROTEIN AF-17"/>
    <property type="match status" value="1"/>
</dbReference>
<dbReference type="Pfam" id="PF13831">
    <property type="entry name" value="PHD_2"/>
    <property type="match status" value="1"/>
</dbReference>
<dbReference type="Pfam" id="PF13832">
    <property type="entry name" value="zf-HC5HC2H_2"/>
    <property type="match status" value="1"/>
</dbReference>
<dbReference type="SMART" id="SM00249">
    <property type="entry name" value="PHD"/>
    <property type="match status" value="2"/>
</dbReference>
<dbReference type="SUPFAM" id="SSF57903">
    <property type="entry name" value="FYVE/PHD zinc finger"/>
    <property type="match status" value="1"/>
</dbReference>
<dbReference type="PROSITE" id="PS51805">
    <property type="entry name" value="EPHD"/>
    <property type="match status" value="1"/>
</dbReference>
<dbReference type="PROSITE" id="PS01359">
    <property type="entry name" value="ZF_PHD_1"/>
    <property type="match status" value="1"/>
</dbReference>
<dbReference type="PROSITE" id="PS50016">
    <property type="entry name" value="ZF_PHD_2"/>
    <property type="match status" value="1"/>
</dbReference>
<name>AF17_HUMAN</name>
<comment type="subunit">
    <text evidence="4">Interacts with histone H3; interaction is necessary for MLLT6 binding to nucleosomes; interaction is inhibited by histone H3 'Lys-27' methylations (H3K27me1, H3K27me2 and H3K27me3).</text>
</comment>
<comment type="interaction">
    <interactant intactId="EBI-740216">
        <id>P55198</id>
    </interactant>
    <interactant intactId="EBI-702390">
        <id>Q9UBB4</id>
        <label>ATXN10</label>
    </interactant>
    <organismsDiffer>false</organismsDiffer>
    <experiments>3</experiments>
</comment>
<comment type="interaction">
    <interactant intactId="EBI-740216">
        <id>P55198</id>
    </interactant>
    <interactant intactId="EBI-740209">
        <id>P53567</id>
        <label>CEBPG</label>
    </interactant>
    <organismsDiffer>false</organismsDiffer>
    <experiments>3</experiments>
</comment>
<comment type="interaction">
    <interactant intactId="EBI-740216">
        <id>P55198</id>
    </interactant>
    <interactant intactId="EBI-10192698">
        <id>Q02930-3</id>
        <label>CREB5</label>
    </interactant>
    <organismsDiffer>false</organismsDiffer>
    <experiments>3</experiments>
</comment>
<comment type="interaction">
    <interactant intactId="EBI-740216">
        <id>P55198</id>
    </interactant>
    <interactant intactId="EBI-717919">
        <id>Q4V328</id>
        <label>GRIPAP1</label>
    </interactant>
    <organismsDiffer>false</organismsDiffer>
    <experiments>3</experiments>
</comment>
<comment type="interaction">
    <interactant intactId="EBI-740216">
        <id>P55198</id>
    </interactant>
    <interactant intactId="EBI-14568740">
        <id>B7ZLY0</id>
        <label>PHC2</label>
    </interactant>
    <organismsDiffer>false</organismsDiffer>
    <experiments>3</experiments>
</comment>
<comment type="interaction">
    <interactant intactId="EBI-740216">
        <id>P55198</id>
    </interactant>
    <interactant intactId="EBI-714158">
        <id>Q13526</id>
        <label>PIN1</label>
    </interactant>
    <organismsDiffer>false</organismsDiffer>
    <experiments>3</experiments>
</comment>
<comment type="interaction">
    <interactant intactId="EBI-740216">
        <id>P55198</id>
    </interactant>
    <interactant intactId="EBI-11741437">
        <id>Q08117-2</id>
        <label>TLE5</label>
    </interactant>
    <organismsDiffer>false</organismsDiffer>
    <experiments>3</experiments>
</comment>
<comment type="interaction">
    <interactant intactId="EBI-740216">
        <id>P55198</id>
    </interactant>
    <interactant intactId="EBI-10173939">
        <id>Q9UMX0-2</id>
        <label>UBQLN1</label>
    </interactant>
    <organismsDiffer>false</organismsDiffer>
    <experiments>3</experiments>
</comment>
<comment type="interaction">
    <interactant intactId="EBI-740216">
        <id>P55198</id>
    </interactant>
    <interactant intactId="EBI-711226">
        <id>Q9NRR5</id>
        <label>UBQLN4</label>
    </interactant>
    <organismsDiffer>false</organismsDiffer>
    <experiments>2</experiments>
</comment>
<comment type="interaction">
    <interactant intactId="EBI-740216">
        <id>P55198</id>
    </interactant>
    <interactant intactId="EBI-746595">
        <id>Q96E35</id>
        <label>ZMYND19</label>
    </interactant>
    <organismsDiffer>false</organismsDiffer>
    <experiments>3</experiments>
</comment>
<comment type="subcellular location">
    <subcellularLocation>
        <location evidence="5">Nucleus</location>
    </subcellularLocation>
</comment>
<comment type="disease">
    <text>A chromosomal aberration involving MLLT6 is associated with acute leukemias. Translocation t(11;17)(q23;q21) with KMT2A/MLL1. The result is a rogue activator protein.</text>
</comment>
<comment type="sequence caution" evidence="5">
    <conflict type="erroneous initiation">
        <sequence resource="EMBL-CDS" id="AAH07237"/>
    </conflict>
    <text>Truncated N-terminus.</text>
</comment>
<comment type="sequence caution" evidence="5">
    <conflict type="erroneous initiation">
        <sequence resource="EMBL-CDS" id="BAB15670"/>
    </conflict>
    <text>Truncated N-terminus.</text>
</comment>
<comment type="online information" name="Atlas of Genetics and Cytogenetics in Oncology and Haematology">
    <link uri="https://atlasgeneticsoncology.org/gene/7/AF17"/>
</comment>
<sequence>MKEMVGGCCVCSDERGWAENPLVYCDGHACSVAVHQACYGIVQVPTGPWFCRKCESQERAARVRCELCPHKDGALKRTDNGGWAHVVCALYIPEVQFANVLTMEPIVLQYVPHDRFNKTCYICEEQGRESKAASGACMTCNRHGCRQAFHVTCAQMAGLLCEEEVLEVDNVKYCGYCKYHFSKMKTSRHSSGGGGGGAGGGGGSMGGGGSGFISGRRSRSASPSTQQEKHPTHHERGQKKSRKDKERLKQKHKKRPESPPSILTPPVVPTADKVSSSASSSSHHEASTQETSESSRESKGKKSSSHSLSHKGKKLSSGKGVSSFTSASSSSSSSSSSSGGPFQPAVSSLQSSPDFSAFPKLEQPEEDKYSKPTAPAPSAPPSPSAPEPPKADLFEQKVVFSGFGPIMRFSTTTSSSGRARAPSPGDYKSPHVTGSGASAGTHKRMPALSATPVPADETPETGLKEKKHKASKRSRHGPGRPKGSRNKEGTGGPAAPSLPSAQLAGFTATAASPFSGGSLVSSGLGGLSSRTFGPSGSLPSLSLESPLLGAGIYTSNKDPISHSGGMLRAVCSTPLSSSLLGPPGTSALPRLSRSPFTSTLPSSSASISTTQVFSLAGSTFSLPSTHIFGTPMGAVNPLLSQAESSHTEPDLEDCSFRCRGTSPQESLSSMSPISSLPALFDQTASAPCGGGQLDPAAPGTTNMEQLLEKQGDGEAGVNIVEMLKALHALQKENQRLQEQILSLTAKKERLQILNVQLSVPFPALPAALPAANGPVPGPYGLPPQAGSSDSLSTSKSPPGKSSLGLDNSLSTSSEDPHSGCPSRSSSSLSFHSTPPPLPLLQQSPATLPLALPGAPAPLPPQPQNGLGRAPGAAGLGAMPMAEGLLGGLAGSGGLPLNGLLGGLNGAAAPNPASLSQAGGAPTLQLPGCLNSLTEQQRHLLQQQEQQLQQLQQLLASPQLTPEHQTVVYQMIQQIQQKRELQRLQMAGGSQLPMASLLAGSSTPLLSAGTPGLLPTASAPPLLPAGALVAPSLGNNTSLMAAAAAAAAVAAAGGPPVLTAQTNPFLSLSGAEGSGGGPKGGTADKGASANQEKG</sequence>
<evidence type="ECO:0000255" key="1">
    <source>
        <dbReference type="PROSITE-ProRule" id="PRU00146"/>
    </source>
</evidence>
<evidence type="ECO:0000255" key="2">
    <source>
        <dbReference type="PROSITE-ProRule" id="PRU01146"/>
    </source>
</evidence>
<evidence type="ECO:0000256" key="3">
    <source>
        <dbReference type="SAM" id="MobiDB-lite"/>
    </source>
</evidence>
<evidence type="ECO:0000269" key="4">
    <source>
    </source>
</evidence>
<evidence type="ECO:0000305" key="5"/>
<evidence type="ECO:0007744" key="6">
    <source>
    </source>
</evidence>
<evidence type="ECO:0007744" key="7">
    <source>
    </source>
</evidence>
<organism>
    <name type="scientific">Homo sapiens</name>
    <name type="common">Human</name>
    <dbReference type="NCBI Taxonomy" id="9606"/>
    <lineage>
        <taxon>Eukaryota</taxon>
        <taxon>Metazoa</taxon>
        <taxon>Chordata</taxon>
        <taxon>Craniata</taxon>
        <taxon>Vertebrata</taxon>
        <taxon>Euteleostomi</taxon>
        <taxon>Mammalia</taxon>
        <taxon>Eutheria</taxon>
        <taxon>Euarchontoglires</taxon>
        <taxon>Primates</taxon>
        <taxon>Haplorrhini</taxon>
        <taxon>Catarrhini</taxon>
        <taxon>Hominidae</taxon>
        <taxon>Homo</taxon>
    </lineage>
</organism>
<reference key="1">
    <citation type="journal article" date="1994" name="Proc. Natl. Acad. Sci. U.S.A.">
        <title>Leucine-zipper dimerization motif encoded by the AF17 gene fused to ALL-1 (MLL) in acute leukemia.</title>
        <authorList>
            <person name="Prasad R."/>
            <person name="Leshkowitz D."/>
            <person name="Gu Y."/>
            <person name="Alder H."/>
            <person name="Nakamura T."/>
            <person name="Saito H."/>
            <person name="Huebner K."/>
            <person name="Berger R."/>
            <person name="Croce C.M."/>
            <person name="Canaani E."/>
        </authorList>
    </citation>
    <scope>NUCLEOTIDE SEQUENCE [MRNA]</scope>
    <scope>CHROMOSOMAL TRANSLOCATION WITH KMT2A/MLL1</scope>
</reference>
<reference key="2">
    <citation type="journal article" date="2006" name="Nature">
        <title>DNA sequence of human chromosome 17 and analysis of rearrangement in the human lineage.</title>
        <authorList>
            <person name="Zody M.C."/>
            <person name="Garber M."/>
            <person name="Adams D.J."/>
            <person name="Sharpe T."/>
            <person name="Harrow J."/>
            <person name="Lupski J.R."/>
            <person name="Nicholson C."/>
            <person name="Searle S.M."/>
            <person name="Wilming L."/>
            <person name="Young S.K."/>
            <person name="Abouelleil A."/>
            <person name="Allen N.R."/>
            <person name="Bi W."/>
            <person name="Bloom T."/>
            <person name="Borowsky M.L."/>
            <person name="Bugalter B.E."/>
            <person name="Butler J."/>
            <person name="Chang J.L."/>
            <person name="Chen C.-K."/>
            <person name="Cook A."/>
            <person name="Corum B."/>
            <person name="Cuomo C.A."/>
            <person name="de Jong P.J."/>
            <person name="DeCaprio D."/>
            <person name="Dewar K."/>
            <person name="FitzGerald M."/>
            <person name="Gilbert J."/>
            <person name="Gibson R."/>
            <person name="Gnerre S."/>
            <person name="Goldstein S."/>
            <person name="Grafham D.V."/>
            <person name="Grocock R."/>
            <person name="Hafez N."/>
            <person name="Hagopian D.S."/>
            <person name="Hart E."/>
            <person name="Norman C.H."/>
            <person name="Humphray S."/>
            <person name="Jaffe D.B."/>
            <person name="Jones M."/>
            <person name="Kamal M."/>
            <person name="Khodiyar V.K."/>
            <person name="LaButti K."/>
            <person name="Laird G."/>
            <person name="Lehoczky J."/>
            <person name="Liu X."/>
            <person name="Lokyitsang T."/>
            <person name="Loveland J."/>
            <person name="Lui A."/>
            <person name="Macdonald P."/>
            <person name="Major J.E."/>
            <person name="Matthews L."/>
            <person name="Mauceli E."/>
            <person name="McCarroll S.A."/>
            <person name="Mihalev A.H."/>
            <person name="Mudge J."/>
            <person name="Nguyen C."/>
            <person name="Nicol R."/>
            <person name="O'Leary S.B."/>
            <person name="Osoegawa K."/>
            <person name="Schwartz D.C."/>
            <person name="Shaw-Smith C."/>
            <person name="Stankiewicz P."/>
            <person name="Steward C."/>
            <person name="Swarbreck D."/>
            <person name="Venkataraman V."/>
            <person name="Whittaker C.A."/>
            <person name="Yang X."/>
            <person name="Zimmer A.R."/>
            <person name="Bradley A."/>
            <person name="Hubbard T."/>
            <person name="Birren B.W."/>
            <person name="Rogers J."/>
            <person name="Lander E.S."/>
            <person name="Nusbaum C."/>
        </authorList>
    </citation>
    <scope>NUCLEOTIDE SEQUENCE [LARGE SCALE GENOMIC DNA]</scope>
</reference>
<reference key="3">
    <citation type="submission" date="2005-03" db="EMBL/GenBank/DDBJ databases">
        <authorList>
            <person name="Totoki Y."/>
            <person name="Toyoda A."/>
            <person name="Takeda T."/>
            <person name="Sakaki Y."/>
            <person name="Tanaka A."/>
            <person name="Yokoyama S."/>
            <person name="Ohara O."/>
            <person name="Nagase T."/>
            <person name="Kikuno R.F."/>
        </authorList>
    </citation>
    <scope>NUCLEOTIDE SEQUENCE [LARGE SCALE MRNA] OF 5-1093</scope>
    <source>
        <tissue>Spleen</tissue>
    </source>
</reference>
<reference key="4">
    <citation type="journal article" date="2004" name="Nat. Genet.">
        <title>Complete sequencing and characterization of 21,243 full-length human cDNAs.</title>
        <authorList>
            <person name="Ota T."/>
            <person name="Suzuki Y."/>
            <person name="Nishikawa T."/>
            <person name="Otsuki T."/>
            <person name="Sugiyama T."/>
            <person name="Irie R."/>
            <person name="Wakamatsu A."/>
            <person name="Hayashi K."/>
            <person name="Sato H."/>
            <person name="Nagai K."/>
            <person name="Kimura K."/>
            <person name="Makita H."/>
            <person name="Sekine M."/>
            <person name="Obayashi M."/>
            <person name="Nishi T."/>
            <person name="Shibahara T."/>
            <person name="Tanaka T."/>
            <person name="Ishii S."/>
            <person name="Yamamoto J."/>
            <person name="Saito K."/>
            <person name="Kawai Y."/>
            <person name="Isono Y."/>
            <person name="Nakamura Y."/>
            <person name="Nagahari K."/>
            <person name="Murakami K."/>
            <person name="Yasuda T."/>
            <person name="Iwayanagi T."/>
            <person name="Wagatsuma M."/>
            <person name="Shiratori A."/>
            <person name="Sudo H."/>
            <person name="Hosoiri T."/>
            <person name="Kaku Y."/>
            <person name="Kodaira H."/>
            <person name="Kondo H."/>
            <person name="Sugawara M."/>
            <person name="Takahashi M."/>
            <person name="Kanda K."/>
            <person name="Yokoi T."/>
            <person name="Furuya T."/>
            <person name="Kikkawa E."/>
            <person name="Omura Y."/>
            <person name="Abe K."/>
            <person name="Kamihara K."/>
            <person name="Katsuta N."/>
            <person name="Sato K."/>
            <person name="Tanikawa M."/>
            <person name="Yamazaki M."/>
            <person name="Ninomiya K."/>
            <person name="Ishibashi T."/>
            <person name="Yamashita H."/>
            <person name="Murakawa K."/>
            <person name="Fujimori K."/>
            <person name="Tanai H."/>
            <person name="Kimata M."/>
            <person name="Watanabe M."/>
            <person name="Hiraoka S."/>
            <person name="Chiba Y."/>
            <person name="Ishida S."/>
            <person name="Ono Y."/>
            <person name="Takiguchi S."/>
            <person name="Watanabe S."/>
            <person name="Yosida M."/>
            <person name="Hotuta T."/>
            <person name="Kusano J."/>
            <person name="Kanehori K."/>
            <person name="Takahashi-Fujii A."/>
            <person name="Hara H."/>
            <person name="Tanase T.-O."/>
            <person name="Nomura Y."/>
            <person name="Togiya S."/>
            <person name="Komai F."/>
            <person name="Hara R."/>
            <person name="Takeuchi K."/>
            <person name="Arita M."/>
            <person name="Imose N."/>
            <person name="Musashino K."/>
            <person name="Yuuki H."/>
            <person name="Oshima A."/>
            <person name="Sasaki N."/>
            <person name="Aotsuka S."/>
            <person name="Yoshikawa Y."/>
            <person name="Matsunawa H."/>
            <person name="Ichihara T."/>
            <person name="Shiohata N."/>
            <person name="Sano S."/>
            <person name="Moriya S."/>
            <person name="Momiyama H."/>
            <person name="Satoh N."/>
            <person name="Takami S."/>
            <person name="Terashima Y."/>
            <person name="Suzuki O."/>
            <person name="Nakagawa S."/>
            <person name="Senoh A."/>
            <person name="Mizoguchi H."/>
            <person name="Goto Y."/>
            <person name="Shimizu F."/>
            <person name="Wakebe H."/>
            <person name="Hishigaki H."/>
            <person name="Watanabe T."/>
            <person name="Sugiyama A."/>
            <person name="Takemoto M."/>
            <person name="Kawakami B."/>
            <person name="Yamazaki M."/>
            <person name="Watanabe K."/>
            <person name="Kumagai A."/>
            <person name="Itakura S."/>
            <person name="Fukuzumi Y."/>
            <person name="Fujimori Y."/>
            <person name="Komiyama M."/>
            <person name="Tashiro H."/>
            <person name="Tanigami A."/>
            <person name="Fujiwara T."/>
            <person name="Ono T."/>
            <person name="Yamada K."/>
            <person name="Fujii Y."/>
            <person name="Ozaki K."/>
            <person name="Hirao M."/>
            <person name="Ohmori Y."/>
            <person name="Kawabata A."/>
            <person name="Hikiji T."/>
            <person name="Kobatake N."/>
            <person name="Inagaki H."/>
            <person name="Ikema Y."/>
            <person name="Okamoto S."/>
            <person name="Okitani R."/>
            <person name="Kawakami T."/>
            <person name="Noguchi S."/>
            <person name="Itoh T."/>
            <person name="Shigeta K."/>
            <person name="Senba T."/>
            <person name="Matsumura K."/>
            <person name="Nakajima Y."/>
            <person name="Mizuno T."/>
            <person name="Morinaga M."/>
            <person name="Sasaki M."/>
            <person name="Togashi T."/>
            <person name="Oyama M."/>
            <person name="Hata H."/>
            <person name="Watanabe M."/>
            <person name="Komatsu T."/>
            <person name="Mizushima-Sugano J."/>
            <person name="Satoh T."/>
            <person name="Shirai Y."/>
            <person name="Takahashi Y."/>
            <person name="Nakagawa K."/>
            <person name="Okumura K."/>
            <person name="Nagase T."/>
            <person name="Nomura N."/>
            <person name="Kikuchi H."/>
            <person name="Masuho Y."/>
            <person name="Yamashita R."/>
            <person name="Nakai K."/>
            <person name="Yada T."/>
            <person name="Nakamura Y."/>
            <person name="Ohara O."/>
            <person name="Isogai T."/>
            <person name="Sugano S."/>
        </authorList>
    </citation>
    <scope>NUCLEOTIDE SEQUENCE [LARGE SCALE MRNA] OF 624-1093</scope>
    <source>
        <tissue>Ileal mucosa</tissue>
    </source>
</reference>
<reference key="5">
    <citation type="journal article" date="2004" name="Genome Res.">
        <title>The status, quality, and expansion of the NIH full-length cDNA project: the Mammalian Gene Collection (MGC).</title>
        <authorList>
            <consortium name="The MGC Project Team"/>
        </authorList>
    </citation>
    <scope>NUCLEOTIDE SEQUENCE [LARGE SCALE MRNA] OF 624-1093</scope>
    <source>
        <tissue>Skin</tissue>
    </source>
</reference>
<reference key="6">
    <citation type="journal article" date="2007" name="BMC Genomics">
        <title>The full-ORF clone resource of the German cDNA consortium.</title>
        <authorList>
            <person name="Bechtel S."/>
            <person name="Rosenfelder H."/>
            <person name="Duda A."/>
            <person name="Schmidt C.P."/>
            <person name="Ernst U."/>
            <person name="Wellenreuther R."/>
            <person name="Mehrle A."/>
            <person name="Schuster C."/>
            <person name="Bahr A."/>
            <person name="Bloecker H."/>
            <person name="Heubner D."/>
            <person name="Hoerlein A."/>
            <person name="Michel G."/>
            <person name="Wedler H."/>
            <person name="Koehrer K."/>
            <person name="Ottenwaelder B."/>
            <person name="Poustka A."/>
            <person name="Wiemann S."/>
            <person name="Schupp I."/>
        </authorList>
    </citation>
    <scope>NUCLEOTIDE SEQUENCE [LARGE SCALE MRNA] OF 648-1093</scope>
    <source>
        <tissue>Testis</tissue>
    </source>
</reference>
<reference key="7">
    <citation type="journal article" date="2009" name="Sci. Signal.">
        <title>Quantitative phosphoproteomic analysis of T cell receptor signaling reveals system-wide modulation of protein-protein interactions.</title>
        <authorList>
            <person name="Mayya V."/>
            <person name="Lundgren D.H."/>
            <person name="Hwang S.-I."/>
            <person name="Rezaul K."/>
            <person name="Wu L."/>
            <person name="Eng J.K."/>
            <person name="Rodionov V."/>
            <person name="Han D.K."/>
        </authorList>
    </citation>
    <scope>PHOSPHORYLATION [LARGE SCALE ANALYSIS] AT THR-451</scope>
    <scope>IDENTIFICATION BY MASS SPECTROMETRY [LARGE SCALE ANALYSIS]</scope>
    <source>
        <tissue>Leukemic T-cell</tissue>
    </source>
</reference>
<reference key="8">
    <citation type="journal article" date="2013" name="J. Proteome Res.">
        <title>Toward a comprehensive characterization of a human cancer cell phosphoproteome.</title>
        <authorList>
            <person name="Zhou H."/>
            <person name="Di Palma S."/>
            <person name="Preisinger C."/>
            <person name="Peng M."/>
            <person name="Polat A.N."/>
            <person name="Heck A.J."/>
            <person name="Mohammed S."/>
        </authorList>
    </citation>
    <scope>PHOSPHORYLATION [LARGE SCALE ANALYSIS] AT SER-258; SER-378 AND SER-423</scope>
    <scope>IDENTIFICATION BY MASS SPECTROMETRY [LARGE SCALE ANALYSIS]</scope>
    <source>
        <tissue>Cervix carcinoma</tissue>
        <tissue>Erythroleukemia</tissue>
    </source>
</reference>
<reference key="9">
    <citation type="journal article" date="2015" name="Mol. Cell">
        <title>The PZP Domain of AF10 Senses Unmodified H3K27 to Regulate DOT1L-Mediated Methylation of H3K79.</title>
        <authorList>
            <person name="Chen S."/>
            <person name="Yang Z."/>
            <person name="Wilkinson A.W."/>
            <person name="Deshpande A.J."/>
            <person name="Sidoli S."/>
            <person name="Krajewski K."/>
            <person name="Strahl B.D."/>
            <person name="Garcia B.A."/>
            <person name="Armstrong S.A."/>
            <person name="Patel D.J."/>
            <person name="Gozani O."/>
        </authorList>
    </citation>
    <scope>INTERACTION WITH HISTONE H3</scope>
</reference>
<proteinExistence type="evidence at protein level"/>
<accession>P55198</accession>
<accession>Q59F28</accession>
<accession>Q96IU3</accession>
<accession>Q9H5F6</accession>
<accession>Q9UF49</accession>
<protein>
    <recommendedName>
        <fullName>Protein AF-17</fullName>
    </recommendedName>
    <alternativeName>
        <fullName>ALL1-fused gene from chromosome 17 protein</fullName>
    </alternativeName>
</protein>
<keyword id="KW-0160">Chromosomal rearrangement</keyword>
<keyword id="KW-0479">Metal-binding</keyword>
<keyword id="KW-0539">Nucleus</keyword>
<keyword id="KW-0597">Phosphoprotein</keyword>
<keyword id="KW-1267">Proteomics identification</keyword>
<keyword id="KW-0656">Proto-oncogene</keyword>
<keyword id="KW-1185">Reference proteome</keyword>
<keyword id="KW-0677">Repeat</keyword>
<keyword id="KW-0862">Zinc</keyword>
<keyword id="KW-0863">Zinc-finger</keyword>